<gene>
    <name type="primary">ZNF687</name>
    <name type="synonym">KIAA1441</name>
</gene>
<accession>Q8N1G0</accession>
<accession>D3DV17</accession>
<accession>Q68DQ8</accession>
<accession>Q9H937</accession>
<accession>Q9P2A7</accession>
<protein>
    <recommendedName>
        <fullName>Zinc finger protein 687</fullName>
    </recommendedName>
</protein>
<reference key="1">
    <citation type="journal article" date="2000" name="DNA Res.">
        <title>Prediction of the coding sequences of unidentified human genes. XVI. The complete sequences of 150 new cDNA clones from brain which code for large proteins in vitro.</title>
        <authorList>
            <person name="Nagase T."/>
            <person name="Kikuno R."/>
            <person name="Ishikawa K."/>
            <person name="Hirosawa M."/>
            <person name="Ohara O."/>
        </authorList>
    </citation>
    <scope>NUCLEOTIDE SEQUENCE [LARGE SCALE MRNA] (ISOFORM 1)</scope>
    <source>
        <tissue>Brain</tissue>
    </source>
</reference>
<reference key="2">
    <citation type="journal article" date="2007" name="BMC Genomics">
        <title>The full-ORF clone resource of the German cDNA consortium.</title>
        <authorList>
            <person name="Bechtel S."/>
            <person name="Rosenfelder H."/>
            <person name="Duda A."/>
            <person name="Schmidt C.P."/>
            <person name="Ernst U."/>
            <person name="Wellenreuther R."/>
            <person name="Mehrle A."/>
            <person name="Schuster C."/>
            <person name="Bahr A."/>
            <person name="Bloecker H."/>
            <person name="Heubner D."/>
            <person name="Hoerlein A."/>
            <person name="Michel G."/>
            <person name="Wedler H."/>
            <person name="Koehrer K."/>
            <person name="Ottenwaelder B."/>
            <person name="Poustka A."/>
            <person name="Wiemann S."/>
            <person name="Schupp I."/>
        </authorList>
    </citation>
    <scope>NUCLEOTIDE SEQUENCE [LARGE SCALE MRNA] (ISOFORM 1)</scope>
    <source>
        <tissue>Testis</tissue>
    </source>
</reference>
<reference key="3">
    <citation type="journal article" date="2006" name="Nature">
        <title>The DNA sequence and biological annotation of human chromosome 1.</title>
        <authorList>
            <person name="Gregory S.G."/>
            <person name="Barlow K.F."/>
            <person name="McLay K.E."/>
            <person name="Kaul R."/>
            <person name="Swarbreck D."/>
            <person name="Dunham A."/>
            <person name="Scott C.E."/>
            <person name="Howe K.L."/>
            <person name="Woodfine K."/>
            <person name="Spencer C.C.A."/>
            <person name="Jones M.C."/>
            <person name="Gillson C."/>
            <person name="Searle S."/>
            <person name="Zhou Y."/>
            <person name="Kokocinski F."/>
            <person name="McDonald L."/>
            <person name="Evans R."/>
            <person name="Phillips K."/>
            <person name="Atkinson A."/>
            <person name="Cooper R."/>
            <person name="Jones C."/>
            <person name="Hall R.E."/>
            <person name="Andrews T.D."/>
            <person name="Lloyd C."/>
            <person name="Ainscough R."/>
            <person name="Almeida J.P."/>
            <person name="Ambrose K.D."/>
            <person name="Anderson F."/>
            <person name="Andrew R.W."/>
            <person name="Ashwell R.I.S."/>
            <person name="Aubin K."/>
            <person name="Babbage A.K."/>
            <person name="Bagguley C.L."/>
            <person name="Bailey J."/>
            <person name="Beasley H."/>
            <person name="Bethel G."/>
            <person name="Bird C.P."/>
            <person name="Bray-Allen S."/>
            <person name="Brown J.Y."/>
            <person name="Brown A.J."/>
            <person name="Buckley D."/>
            <person name="Burton J."/>
            <person name="Bye J."/>
            <person name="Carder C."/>
            <person name="Chapman J.C."/>
            <person name="Clark S.Y."/>
            <person name="Clarke G."/>
            <person name="Clee C."/>
            <person name="Cobley V."/>
            <person name="Collier R.E."/>
            <person name="Corby N."/>
            <person name="Coville G.J."/>
            <person name="Davies J."/>
            <person name="Deadman R."/>
            <person name="Dunn M."/>
            <person name="Earthrowl M."/>
            <person name="Ellington A.G."/>
            <person name="Errington H."/>
            <person name="Frankish A."/>
            <person name="Frankland J."/>
            <person name="French L."/>
            <person name="Garner P."/>
            <person name="Garnett J."/>
            <person name="Gay L."/>
            <person name="Ghori M.R.J."/>
            <person name="Gibson R."/>
            <person name="Gilby L.M."/>
            <person name="Gillett W."/>
            <person name="Glithero R.J."/>
            <person name="Grafham D.V."/>
            <person name="Griffiths C."/>
            <person name="Griffiths-Jones S."/>
            <person name="Grocock R."/>
            <person name="Hammond S."/>
            <person name="Harrison E.S.I."/>
            <person name="Hart E."/>
            <person name="Haugen E."/>
            <person name="Heath P.D."/>
            <person name="Holmes S."/>
            <person name="Holt K."/>
            <person name="Howden P.J."/>
            <person name="Hunt A.R."/>
            <person name="Hunt S.E."/>
            <person name="Hunter G."/>
            <person name="Isherwood J."/>
            <person name="James R."/>
            <person name="Johnson C."/>
            <person name="Johnson D."/>
            <person name="Joy A."/>
            <person name="Kay M."/>
            <person name="Kershaw J.K."/>
            <person name="Kibukawa M."/>
            <person name="Kimberley A.M."/>
            <person name="King A."/>
            <person name="Knights A.J."/>
            <person name="Lad H."/>
            <person name="Laird G."/>
            <person name="Lawlor S."/>
            <person name="Leongamornlert D.A."/>
            <person name="Lloyd D.M."/>
            <person name="Loveland J."/>
            <person name="Lovell J."/>
            <person name="Lush M.J."/>
            <person name="Lyne R."/>
            <person name="Martin S."/>
            <person name="Mashreghi-Mohammadi M."/>
            <person name="Matthews L."/>
            <person name="Matthews N.S.W."/>
            <person name="McLaren S."/>
            <person name="Milne S."/>
            <person name="Mistry S."/>
            <person name="Moore M.J.F."/>
            <person name="Nickerson T."/>
            <person name="O'Dell C.N."/>
            <person name="Oliver K."/>
            <person name="Palmeiri A."/>
            <person name="Palmer S.A."/>
            <person name="Parker A."/>
            <person name="Patel D."/>
            <person name="Pearce A.V."/>
            <person name="Peck A.I."/>
            <person name="Pelan S."/>
            <person name="Phelps K."/>
            <person name="Phillimore B.J."/>
            <person name="Plumb R."/>
            <person name="Rajan J."/>
            <person name="Raymond C."/>
            <person name="Rouse G."/>
            <person name="Saenphimmachak C."/>
            <person name="Sehra H.K."/>
            <person name="Sheridan E."/>
            <person name="Shownkeen R."/>
            <person name="Sims S."/>
            <person name="Skuce C.D."/>
            <person name="Smith M."/>
            <person name="Steward C."/>
            <person name="Subramanian S."/>
            <person name="Sycamore N."/>
            <person name="Tracey A."/>
            <person name="Tromans A."/>
            <person name="Van Helmond Z."/>
            <person name="Wall M."/>
            <person name="Wallis J.M."/>
            <person name="White S."/>
            <person name="Whitehead S.L."/>
            <person name="Wilkinson J.E."/>
            <person name="Willey D.L."/>
            <person name="Williams H."/>
            <person name="Wilming L."/>
            <person name="Wray P.W."/>
            <person name="Wu Z."/>
            <person name="Coulson A."/>
            <person name="Vaudin M."/>
            <person name="Sulston J.E."/>
            <person name="Durbin R.M."/>
            <person name="Hubbard T."/>
            <person name="Wooster R."/>
            <person name="Dunham I."/>
            <person name="Carter N.P."/>
            <person name="McVean G."/>
            <person name="Ross M.T."/>
            <person name="Harrow J."/>
            <person name="Olson M.V."/>
            <person name="Beck S."/>
            <person name="Rogers J."/>
            <person name="Bentley D.R."/>
        </authorList>
    </citation>
    <scope>NUCLEOTIDE SEQUENCE [LARGE SCALE GENOMIC DNA]</scope>
</reference>
<reference key="4">
    <citation type="submission" date="2005-09" db="EMBL/GenBank/DDBJ databases">
        <authorList>
            <person name="Mural R.J."/>
            <person name="Istrail S."/>
            <person name="Sutton G.G."/>
            <person name="Florea L."/>
            <person name="Halpern A.L."/>
            <person name="Mobarry C.M."/>
            <person name="Lippert R."/>
            <person name="Walenz B."/>
            <person name="Shatkay H."/>
            <person name="Dew I."/>
            <person name="Miller J.R."/>
            <person name="Flanigan M.J."/>
            <person name="Edwards N.J."/>
            <person name="Bolanos R."/>
            <person name="Fasulo D."/>
            <person name="Halldorsson B.V."/>
            <person name="Hannenhalli S."/>
            <person name="Turner R."/>
            <person name="Yooseph S."/>
            <person name="Lu F."/>
            <person name="Nusskern D.R."/>
            <person name="Shue B.C."/>
            <person name="Zheng X.H."/>
            <person name="Zhong F."/>
            <person name="Delcher A.L."/>
            <person name="Huson D.H."/>
            <person name="Kravitz S.A."/>
            <person name="Mouchard L."/>
            <person name="Reinert K."/>
            <person name="Remington K.A."/>
            <person name="Clark A.G."/>
            <person name="Waterman M.S."/>
            <person name="Eichler E.E."/>
            <person name="Adams M.D."/>
            <person name="Hunkapiller M.W."/>
            <person name="Myers E.W."/>
            <person name="Venter J.C."/>
        </authorList>
    </citation>
    <scope>NUCLEOTIDE SEQUENCE [LARGE SCALE GENOMIC DNA]</scope>
</reference>
<reference key="5">
    <citation type="journal article" date="2004" name="Genome Res.">
        <title>The status, quality, and expansion of the NIH full-length cDNA project: the Mammalian Gene Collection (MGC).</title>
        <authorList>
            <consortium name="The MGC Project Team"/>
        </authorList>
    </citation>
    <scope>NUCLEOTIDE SEQUENCE [LARGE SCALE MRNA] (ISOFORM 1)</scope>
    <source>
        <tissue>Brain</tissue>
    </source>
</reference>
<reference key="6">
    <citation type="journal article" date="2004" name="Nat. Genet.">
        <title>Complete sequencing and characterization of 21,243 full-length human cDNAs.</title>
        <authorList>
            <person name="Ota T."/>
            <person name="Suzuki Y."/>
            <person name="Nishikawa T."/>
            <person name="Otsuki T."/>
            <person name="Sugiyama T."/>
            <person name="Irie R."/>
            <person name="Wakamatsu A."/>
            <person name="Hayashi K."/>
            <person name="Sato H."/>
            <person name="Nagai K."/>
            <person name="Kimura K."/>
            <person name="Makita H."/>
            <person name="Sekine M."/>
            <person name="Obayashi M."/>
            <person name="Nishi T."/>
            <person name="Shibahara T."/>
            <person name="Tanaka T."/>
            <person name="Ishii S."/>
            <person name="Yamamoto J."/>
            <person name="Saito K."/>
            <person name="Kawai Y."/>
            <person name="Isono Y."/>
            <person name="Nakamura Y."/>
            <person name="Nagahari K."/>
            <person name="Murakami K."/>
            <person name="Yasuda T."/>
            <person name="Iwayanagi T."/>
            <person name="Wagatsuma M."/>
            <person name="Shiratori A."/>
            <person name="Sudo H."/>
            <person name="Hosoiri T."/>
            <person name="Kaku Y."/>
            <person name="Kodaira H."/>
            <person name="Kondo H."/>
            <person name="Sugawara M."/>
            <person name="Takahashi M."/>
            <person name="Kanda K."/>
            <person name="Yokoi T."/>
            <person name="Furuya T."/>
            <person name="Kikkawa E."/>
            <person name="Omura Y."/>
            <person name="Abe K."/>
            <person name="Kamihara K."/>
            <person name="Katsuta N."/>
            <person name="Sato K."/>
            <person name="Tanikawa M."/>
            <person name="Yamazaki M."/>
            <person name="Ninomiya K."/>
            <person name="Ishibashi T."/>
            <person name="Yamashita H."/>
            <person name="Murakawa K."/>
            <person name="Fujimori K."/>
            <person name="Tanai H."/>
            <person name="Kimata M."/>
            <person name="Watanabe M."/>
            <person name="Hiraoka S."/>
            <person name="Chiba Y."/>
            <person name="Ishida S."/>
            <person name="Ono Y."/>
            <person name="Takiguchi S."/>
            <person name="Watanabe S."/>
            <person name="Yosida M."/>
            <person name="Hotuta T."/>
            <person name="Kusano J."/>
            <person name="Kanehori K."/>
            <person name="Takahashi-Fujii A."/>
            <person name="Hara H."/>
            <person name="Tanase T.-O."/>
            <person name="Nomura Y."/>
            <person name="Togiya S."/>
            <person name="Komai F."/>
            <person name="Hara R."/>
            <person name="Takeuchi K."/>
            <person name="Arita M."/>
            <person name="Imose N."/>
            <person name="Musashino K."/>
            <person name="Yuuki H."/>
            <person name="Oshima A."/>
            <person name="Sasaki N."/>
            <person name="Aotsuka S."/>
            <person name="Yoshikawa Y."/>
            <person name="Matsunawa H."/>
            <person name="Ichihara T."/>
            <person name="Shiohata N."/>
            <person name="Sano S."/>
            <person name="Moriya S."/>
            <person name="Momiyama H."/>
            <person name="Satoh N."/>
            <person name="Takami S."/>
            <person name="Terashima Y."/>
            <person name="Suzuki O."/>
            <person name="Nakagawa S."/>
            <person name="Senoh A."/>
            <person name="Mizoguchi H."/>
            <person name="Goto Y."/>
            <person name="Shimizu F."/>
            <person name="Wakebe H."/>
            <person name="Hishigaki H."/>
            <person name="Watanabe T."/>
            <person name="Sugiyama A."/>
            <person name="Takemoto M."/>
            <person name="Kawakami B."/>
            <person name="Yamazaki M."/>
            <person name="Watanabe K."/>
            <person name="Kumagai A."/>
            <person name="Itakura S."/>
            <person name="Fukuzumi Y."/>
            <person name="Fujimori Y."/>
            <person name="Komiyama M."/>
            <person name="Tashiro H."/>
            <person name="Tanigami A."/>
            <person name="Fujiwara T."/>
            <person name="Ono T."/>
            <person name="Yamada K."/>
            <person name="Fujii Y."/>
            <person name="Ozaki K."/>
            <person name="Hirao M."/>
            <person name="Ohmori Y."/>
            <person name="Kawabata A."/>
            <person name="Hikiji T."/>
            <person name="Kobatake N."/>
            <person name="Inagaki H."/>
            <person name="Ikema Y."/>
            <person name="Okamoto S."/>
            <person name="Okitani R."/>
            <person name="Kawakami T."/>
            <person name="Noguchi S."/>
            <person name="Itoh T."/>
            <person name="Shigeta K."/>
            <person name="Senba T."/>
            <person name="Matsumura K."/>
            <person name="Nakajima Y."/>
            <person name="Mizuno T."/>
            <person name="Morinaga M."/>
            <person name="Sasaki M."/>
            <person name="Togashi T."/>
            <person name="Oyama M."/>
            <person name="Hata H."/>
            <person name="Watanabe M."/>
            <person name="Komatsu T."/>
            <person name="Mizushima-Sugano J."/>
            <person name="Satoh T."/>
            <person name="Shirai Y."/>
            <person name="Takahashi Y."/>
            <person name="Nakagawa K."/>
            <person name="Okumura K."/>
            <person name="Nagase T."/>
            <person name="Nomura N."/>
            <person name="Kikuchi H."/>
            <person name="Masuho Y."/>
            <person name="Yamashita R."/>
            <person name="Nakai K."/>
            <person name="Yada T."/>
            <person name="Nakamura Y."/>
            <person name="Ohara O."/>
            <person name="Isogai T."/>
            <person name="Sugano S."/>
        </authorList>
    </citation>
    <scope>NUCLEOTIDE SEQUENCE [LARGE SCALE MRNA] OF 399-1237 (ISOFORM 2)</scope>
</reference>
<reference key="7">
    <citation type="journal article" date="2006" name="Cell">
        <title>Global, in vivo, and site-specific phosphorylation dynamics in signaling networks.</title>
        <authorList>
            <person name="Olsen J.V."/>
            <person name="Blagoev B."/>
            <person name="Gnad F."/>
            <person name="Macek B."/>
            <person name="Kumar C."/>
            <person name="Mortensen P."/>
            <person name="Mann M."/>
        </authorList>
    </citation>
    <scope>PHOSPHORYLATION [LARGE SCALE ANALYSIS] AT SER-1057</scope>
    <scope>IDENTIFICATION BY MASS SPECTROMETRY [LARGE SCALE ANALYSIS]</scope>
    <source>
        <tissue>Cervix carcinoma</tissue>
    </source>
</reference>
<reference key="8">
    <citation type="journal article" date="2008" name="Proc. Natl. Acad. Sci. U.S.A.">
        <title>A quantitative atlas of mitotic phosphorylation.</title>
        <authorList>
            <person name="Dephoure N."/>
            <person name="Zhou C."/>
            <person name="Villen J."/>
            <person name="Beausoleil S.A."/>
            <person name="Bakalarski C.E."/>
            <person name="Elledge S.J."/>
            <person name="Gygi S.P."/>
        </authorList>
    </citation>
    <scope>PHOSPHORYLATION [LARGE SCALE ANALYSIS] AT SER-140; SER-253; SER-266; SER-271; SER-433; SER-1082; SER-1083; SER-1085; SER-1191 AND SER-1211</scope>
    <scope>IDENTIFICATION BY MASS SPECTROMETRY [LARGE SCALE ANALYSIS]</scope>
    <source>
        <tissue>Cervix carcinoma</tissue>
    </source>
</reference>
<reference key="9">
    <citation type="journal article" date="2009" name="Anal. Chem.">
        <title>Lys-N and trypsin cover complementary parts of the phosphoproteome in a refined SCX-based approach.</title>
        <authorList>
            <person name="Gauci S."/>
            <person name="Helbig A.O."/>
            <person name="Slijper M."/>
            <person name="Krijgsveld J."/>
            <person name="Heck A.J."/>
            <person name="Mohammed S."/>
        </authorList>
    </citation>
    <scope>IDENTIFICATION BY MASS SPECTROMETRY [LARGE SCALE ANALYSIS]</scope>
</reference>
<reference key="10">
    <citation type="journal article" date="2009" name="Mol. Cell. Proteomics">
        <title>Large-scale proteomics analysis of the human kinome.</title>
        <authorList>
            <person name="Oppermann F.S."/>
            <person name="Gnad F."/>
            <person name="Olsen J.V."/>
            <person name="Hornberger R."/>
            <person name="Greff Z."/>
            <person name="Keri G."/>
            <person name="Mann M."/>
            <person name="Daub H."/>
        </authorList>
    </citation>
    <scope>PHOSPHORYLATION [LARGE SCALE ANALYSIS] AT SER-1057</scope>
    <scope>IDENTIFICATION BY MASS SPECTROMETRY [LARGE SCALE ANALYSIS]</scope>
</reference>
<reference key="11">
    <citation type="journal article" date="2009" name="Sci. Signal.">
        <title>Quantitative phosphoproteomic analysis of T cell receptor signaling reveals system-wide modulation of protein-protein interactions.</title>
        <authorList>
            <person name="Mayya V."/>
            <person name="Lundgren D.H."/>
            <person name="Hwang S.-I."/>
            <person name="Rezaul K."/>
            <person name="Wu L."/>
            <person name="Eng J.K."/>
            <person name="Rodionov V."/>
            <person name="Han D.K."/>
        </authorList>
    </citation>
    <scope>PHOSPHORYLATION [LARGE SCALE ANALYSIS] AT SER-129; THR-148 AND SER-495</scope>
    <scope>IDENTIFICATION BY MASS SPECTROMETRY [LARGE SCALE ANALYSIS]</scope>
    <source>
        <tissue>Leukemic T-cell</tissue>
    </source>
</reference>
<reference key="12">
    <citation type="journal article" date="2010" name="Sci. Signal.">
        <title>Quantitative phosphoproteomics reveals widespread full phosphorylation site occupancy during mitosis.</title>
        <authorList>
            <person name="Olsen J.V."/>
            <person name="Vermeulen M."/>
            <person name="Santamaria A."/>
            <person name="Kumar C."/>
            <person name="Miller M.L."/>
            <person name="Jensen L.J."/>
            <person name="Gnad F."/>
            <person name="Cox J."/>
            <person name="Jensen T.S."/>
            <person name="Nigg E.A."/>
            <person name="Brunak S."/>
            <person name="Mann M."/>
        </authorList>
    </citation>
    <scope>PHOSPHORYLATION [LARGE SCALE ANALYSIS] AT SER-253; SER-266; SER-1057; SER-1106 AND SER-1118</scope>
    <scope>IDENTIFICATION BY MASS SPECTROMETRY [LARGE SCALE ANALYSIS]</scope>
    <source>
        <tissue>Cervix carcinoma</tissue>
    </source>
</reference>
<reference key="13">
    <citation type="journal article" date="2011" name="Sci. Signal.">
        <title>System-wide temporal characterization of the proteome and phosphoproteome of human embryonic stem cell differentiation.</title>
        <authorList>
            <person name="Rigbolt K.T."/>
            <person name="Prokhorova T.A."/>
            <person name="Akimov V."/>
            <person name="Henningsen J."/>
            <person name="Johansen P.T."/>
            <person name="Kratchmarova I."/>
            <person name="Kassem M."/>
            <person name="Mann M."/>
            <person name="Olsen J.V."/>
            <person name="Blagoev B."/>
        </authorList>
    </citation>
    <scope>PHOSPHORYLATION [LARGE SCALE ANALYSIS] AT SER-140; SER-251; SER-253; SER-374; SER-433 AND SER-1057</scope>
    <scope>IDENTIFICATION BY MASS SPECTROMETRY [LARGE SCALE ANALYSIS]</scope>
</reference>
<reference key="14">
    <citation type="journal article" date="2013" name="J. Proteome Res.">
        <title>Toward a comprehensive characterization of a human cancer cell phosphoproteome.</title>
        <authorList>
            <person name="Zhou H."/>
            <person name="Di Palma S."/>
            <person name="Preisinger C."/>
            <person name="Peng M."/>
            <person name="Polat A.N."/>
            <person name="Heck A.J."/>
            <person name="Mohammed S."/>
        </authorList>
    </citation>
    <scope>PHOSPHORYLATION [LARGE SCALE ANALYSIS] AT SER-140; SER-227; SER-242; SER-253; SER-266; SER-271; SER-374; THR-377; SER-433; SER-495; THR-900 AND SER-1057</scope>
    <scope>IDENTIFICATION BY MASS SPECTROMETRY [LARGE SCALE ANALYSIS]</scope>
    <source>
        <tissue>Cervix carcinoma</tissue>
        <tissue>Erythroleukemia</tissue>
    </source>
</reference>
<reference key="15">
    <citation type="journal article" date="2014" name="J. Proteomics">
        <title>An enzyme assisted RP-RPLC approach for in-depth analysis of human liver phosphoproteome.</title>
        <authorList>
            <person name="Bian Y."/>
            <person name="Song C."/>
            <person name="Cheng K."/>
            <person name="Dong M."/>
            <person name="Wang F."/>
            <person name="Huang J."/>
            <person name="Sun D."/>
            <person name="Wang L."/>
            <person name="Ye M."/>
            <person name="Zou H."/>
        </authorList>
    </citation>
    <scope>PHOSPHORYLATION [LARGE SCALE ANALYSIS] AT SER-253; SER-1057 AND SER-1191</scope>
    <scope>IDENTIFICATION BY MASS SPECTROMETRY [LARGE SCALE ANALYSIS]</scope>
    <source>
        <tissue>Liver</tissue>
    </source>
</reference>
<reference key="16">
    <citation type="journal article" date="2014" name="Nat. Struct. Mol. Biol.">
        <title>Uncovering global SUMOylation signaling networks in a site-specific manner.</title>
        <authorList>
            <person name="Hendriks I.A."/>
            <person name="D'Souza R.C."/>
            <person name="Yang B."/>
            <person name="Verlaan-de Vries M."/>
            <person name="Mann M."/>
            <person name="Vertegaal A.C."/>
        </authorList>
    </citation>
    <scope>SUMOYLATION [LARGE SCALE ANALYSIS] AT LYS-285 AND LYS-336</scope>
    <scope>IDENTIFICATION BY MASS SPECTROMETRY [LARGE SCALE ANALYSIS]</scope>
</reference>
<reference key="17">
    <citation type="journal article" date="2015" name="Cell Rep.">
        <title>SUMO-2 orchestrates chromatin modifiers in response to DNA damage.</title>
        <authorList>
            <person name="Hendriks I.A."/>
            <person name="Treffers L.W."/>
            <person name="Verlaan-de Vries M."/>
            <person name="Olsen J.V."/>
            <person name="Vertegaal A.C."/>
        </authorList>
    </citation>
    <scope>SUMOYLATION [LARGE SCALE ANALYSIS] AT LYS-285 AND LYS-336</scope>
    <scope>IDENTIFICATION BY MASS SPECTROMETRY [LARGE SCALE ANALYSIS]</scope>
</reference>
<reference key="18">
    <citation type="journal article" date="2015" name="Mol. Cell. Proteomics">
        <title>System-wide analysis of SUMOylation dynamics in response to replication stress reveals novel small ubiquitin-like modified target proteins and acceptor lysines relevant for genome stability.</title>
        <authorList>
            <person name="Xiao Z."/>
            <person name="Chang J.G."/>
            <person name="Hendriks I.A."/>
            <person name="Sigurdsson J.O."/>
            <person name="Olsen J.V."/>
            <person name="Vertegaal A.C."/>
        </authorList>
    </citation>
    <scope>SUMOYLATION [LARGE SCALE ANALYSIS] AT LYS-285 AND LYS-336</scope>
    <scope>IDENTIFICATION BY MASS SPECTROMETRY [LARGE SCALE ANALYSIS]</scope>
</reference>
<reference key="19">
    <citation type="journal article" date="2016" name="Cell Rep.">
        <title>ZMYND8 Co-localizes with NuRD on Target Genes and Regulates Poly(ADP-Ribose)-Dependent Recruitment of GATAD2A/NuRD to Sites of DNA Damage.</title>
        <authorList>
            <person name="Spruijt C.G."/>
            <person name="Luijsterburg M.S."/>
            <person name="Menafra R."/>
            <person name="Lindeboom R.G."/>
            <person name="Jansen P.W."/>
            <person name="Edupuganti R.R."/>
            <person name="Baltissen M.P."/>
            <person name="Wiegant W.W."/>
            <person name="Voelker-Albert M.C."/>
            <person name="Matarese F."/>
            <person name="Mensinga A."/>
            <person name="Poser I."/>
            <person name="Vos H.R."/>
            <person name="Stunnenberg H.G."/>
            <person name="van Attikum H."/>
            <person name="Vermeulen M."/>
        </authorList>
    </citation>
    <scope>SUBCELLULAR LOCATION</scope>
</reference>
<reference key="20">
    <citation type="journal article" date="2017" name="Nat. Struct. Mol. Biol.">
        <title>Site-specific mapping of the human SUMO proteome reveals co-modification with phosphorylation.</title>
        <authorList>
            <person name="Hendriks I.A."/>
            <person name="Lyon D."/>
            <person name="Young C."/>
            <person name="Jensen L.J."/>
            <person name="Vertegaal A.C."/>
            <person name="Nielsen M.L."/>
        </authorList>
    </citation>
    <scope>SUMOYLATION [LARGE SCALE ANALYSIS] AT LYS-285; LYS-336; LYS-372; LYS-384; LYS-397; LYS-422; LYS-435; LYS-439; LYS-451; LYS-464; LYS-954 AND LYS-1043</scope>
    <scope>IDENTIFICATION BY MASS SPECTROMETRY [LARGE SCALE ANALYSIS]</scope>
</reference>
<reference key="21">
    <citation type="journal article" date="2018" name="Cell Rep.">
        <title>Positive Regulation of Transcription by Human ZMYND8 through Its Association with P-TEFb Complex.</title>
        <authorList>
            <person name="Ghosh K."/>
            <person name="Tang M."/>
            <person name="Kumari N."/>
            <person name="Nandy A."/>
            <person name="Basu S."/>
            <person name="Mall D.P."/>
            <person name="Rai K."/>
            <person name="Biswas D."/>
        </authorList>
    </citation>
    <scope>INTERACTION WITH ZMYND8</scope>
</reference>
<reference key="22">
    <citation type="journal article" date="2016" name="Am. J. Hum. Genet.">
        <title>ZNF687 mutations in severe paget disease of bone associated with giant cell tumor.</title>
        <authorList>
            <person name="Divisato G."/>
            <person name="Formicola D."/>
            <person name="Esposito T."/>
            <person name="Merlotti D."/>
            <person name="Pazzaglia L."/>
            <person name="Del Fattore A."/>
            <person name="Siris E."/>
            <person name="Orcel P."/>
            <person name="Brown J.P."/>
            <person name="Nuti R."/>
            <person name="Strazzullo P."/>
            <person name="Benassi M.S."/>
            <person name="Cancela M.L."/>
            <person name="Michou L."/>
            <person name="Rendina D."/>
            <person name="Gennari L."/>
            <person name="Gianfrancesco F."/>
        </authorList>
    </citation>
    <scope>VARIANTS PDB6 ILE-242 AND ARG-937</scope>
    <scope>SUBCELLULAR LOCATION</scope>
    <scope>DEVELOPMENTAL STAGE</scope>
    <scope>TISSUE SPECIFICITY</scope>
    <scope>CHARACTERIZATION OF VARIANT ARG-937</scope>
</reference>
<proteinExistence type="evidence at protein level"/>
<comment type="function">
    <text>May be involved in transcriptional regulation.</text>
</comment>
<comment type="subunit">
    <text evidence="6">Interacts with ZMYND8.</text>
</comment>
<comment type="interaction">
    <interactant intactId="EBI-1210558">
        <id>Q8N1G0</id>
    </interactant>
    <interactant intactId="EBI-947459">
        <id>Q9H2G4</id>
        <label>TSPYL2</label>
    </interactant>
    <organismsDiffer>false</organismsDiffer>
    <experiments>4</experiments>
</comment>
<comment type="subcellular location">
    <subcellularLocation>
        <location evidence="4">Cytoplasm</location>
    </subcellularLocation>
    <subcellularLocation>
        <location evidence="4 5">Nucleus</location>
    </subcellularLocation>
    <text evidence="4 5">Predominantly nuclear (PubMed:26849110). Localizes to sites of DNA damage (PubMed:27732854).</text>
</comment>
<comment type="alternative products">
    <event type="alternative splicing"/>
    <isoform>
        <id>Q8N1G0-1</id>
        <name>1</name>
        <sequence type="displayed"/>
    </isoform>
    <isoform>
        <id>Q8N1G0-2</id>
        <name>2</name>
        <sequence type="described" ref="VSP_018168 VSP_018169"/>
    </isoform>
</comment>
<comment type="tissue specificity">
    <text evidence="4">Widely expressed with highest levels in obvary, muscle, blood and lung.</text>
</comment>
<comment type="developmental stage">
    <text evidence="4">Up-regulated during osteoclastogenesis induced by treatment of peripheral blood mononuclear cells with CSF1 and TNFSF11, as well as during osteoblastogenesis.</text>
</comment>
<comment type="disease" evidence="4">
    <disease id="DI-04662">
        <name>Paget disease of bone 6</name>
        <acronym>PDB6</acronym>
        <description>An autosomal dominant form of Paget disease, a disorder of bone remodeling characterized by increased bone turnover affecting one or more sites throughout the skeleton, primarily the axial skeleton. Osteoclastic overactivity followed by compensatory osteoblastic activity leads to a structurally disorganized mosaic of bone (woven bone), which is mechanically weaker, larger, less compact, more vascular, and more susceptible to fracture than normal adult lamellar bone. PDB6 is characterized by adult onset of bone pain associated with polyostotic bone lesions primarily affecting the axial skeleton. In some cases, the pagetic tissue undergoes neoplastic transformation, resulting in osteosarcoma and, less frequently, in giant cell tumor of bone.</description>
        <dbReference type="MIM" id="616833"/>
    </disease>
    <text>The disease is caused by variants affecting the gene represented in this entry.</text>
</comment>
<comment type="similarity">
    <text evidence="8">Belongs to the krueppel C2H2-type zinc-finger protein family.</text>
</comment>
<comment type="sequence caution" evidence="8">
    <conflict type="erroneous initiation">
        <sequence resource="EMBL-CDS" id="BAA92679"/>
    </conflict>
</comment>
<comment type="sequence caution" evidence="8">
    <conflict type="erroneous initiation">
        <sequence resource="EMBL-CDS" id="BAB14406"/>
    </conflict>
</comment>
<comment type="sequence caution" evidence="8">
    <conflict type="frameshift">
        <sequence resource="EMBL-CDS" id="CAH18162"/>
    </conflict>
</comment>
<dbReference type="EMBL" id="AB037862">
    <property type="protein sequence ID" value="BAA92679.1"/>
    <property type="status" value="ALT_INIT"/>
    <property type="molecule type" value="mRNA"/>
</dbReference>
<dbReference type="EMBL" id="CR749307">
    <property type="protein sequence ID" value="CAH18162.1"/>
    <property type="status" value="ALT_FRAME"/>
    <property type="molecule type" value="mRNA"/>
</dbReference>
<dbReference type="EMBL" id="AL391069">
    <property type="status" value="NOT_ANNOTATED_CDS"/>
    <property type="molecule type" value="Genomic_DNA"/>
</dbReference>
<dbReference type="EMBL" id="CH471121">
    <property type="protein sequence ID" value="EAW53452.1"/>
    <property type="molecule type" value="Genomic_DNA"/>
</dbReference>
<dbReference type="EMBL" id="CH471121">
    <property type="protein sequence ID" value="EAW53453.1"/>
    <property type="molecule type" value="Genomic_DNA"/>
</dbReference>
<dbReference type="EMBL" id="CH471121">
    <property type="protein sequence ID" value="EAW53454.1"/>
    <property type="molecule type" value="Genomic_DNA"/>
</dbReference>
<dbReference type="EMBL" id="BC032463">
    <property type="protein sequence ID" value="AAH32463.1"/>
    <property type="molecule type" value="mRNA"/>
</dbReference>
<dbReference type="EMBL" id="AK023105">
    <property type="protein sequence ID" value="BAB14406.1"/>
    <property type="status" value="ALT_INIT"/>
    <property type="molecule type" value="mRNA"/>
</dbReference>
<dbReference type="CCDS" id="CCDS992.1">
    <molecule id="Q8N1G0-1"/>
</dbReference>
<dbReference type="RefSeq" id="NP_001291692.1">
    <molecule id="Q8N1G0-1"/>
    <property type="nucleotide sequence ID" value="NM_001304763.2"/>
</dbReference>
<dbReference type="RefSeq" id="NP_001291693.1">
    <molecule id="Q8N1G0-1"/>
    <property type="nucleotide sequence ID" value="NM_001304764.2"/>
</dbReference>
<dbReference type="RefSeq" id="NP_065883.1">
    <molecule id="Q8N1G0-1"/>
    <property type="nucleotide sequence ID" value="NM_020832.3"/>
</dbReference>
<dbReference type="RefSeq" id="XP_011508114.1">
    <molecule id="Q8N1G0-1"/>
    <property type="nucleotide sequence ID" value="XM_011509812.3"/>
</dbReference>
<dbReference type="RefSeq" id="XP_011508115.1">
    <molecule id="Q8N1G0-1"/>
    <property type="nucleotide sequence ID" value="XM_011509813.3"/>
</dbReference>
<dbReference type="RefSeq" id="XP_047282119.1">
    <molecule id="Q8N1G0-1"/>
    <property type="nucleotide sequence ID" value="XM_047426163.1"/>
</dbReference>
<dbReference type="RefSeq" id="XP_047282120.1">
    <molecule id="Q8N1G0-1"/>
    <property type="nucleotide sequence ID" value="XM_047426164.1"/>
</dbReference>
<dbReference type="RefSeq" id="XP_047282121.1">
    <molecule id="Q8N1G0-1"/>
    <property type="nucleotide sequence ID" value="XM_047426165.1"/>
</dbReference>
<dbReference type="RefSeq" id="XP_047282122.1">
    <molecule id="Q8N1G0-1"/>
    <property type="nucleotide sequence ID" value="XM_047426166.1"/>
</dbReference>
<dbReference type="RefSeq" id="XP_054193831.1">
    <molecule id="Q8N1G0-1"/>
    <property type="nucleotide sequence ID" value="XM_054337856.1"/>
</dbReference>
<dbReference type="RefSeq" id="XP_054193832.1">
    <molecule id="Q8N1G0-1"/>
    <property type="nucleotide sequence ID" value="XM_054337857.1"/>
</dbReference>
<dbReference type="RefSeq" id="XP_054193833.1">
    <molecule id="Q8N1G0-1"/>
    <property type="nucleotide sequence ID" value="XM_054337858.1"/>
</dbReference>
<dbReference type="RefSeq" id="XP_054193834.1">
    <molecule id="Q8N1G0-1"/>
    <property type="nucleotide sequence ID" value="XM_054337859.1"/>
</dbReference>
<dbReference type="RefSeq" id="XP_054193837.1">
    <molecule id="Q8N1G0-1"/>
    <property type="nucleotide sequence ID" value="XM_054337862.1"/>
</dbReference>
<dbReference type="BioGRID" id="121643">
    <property type="interactions" value="123"/>
</dbReference>
<dbReference type="FunCoup" id="Q8N1G0">
    <property type="interactions" value="4583"/>
</dbReference>
<dbReference type="IntAct" id="Q8N1G0">
    <property type="interactions" value="75"/>
</dbReference>
<dbReference type="MINT" id="Q8N1G0"/>
<dbReference type="STRING" id="9606.ENSP00000319829"/>
<dbReference type="GlyCosmos" id="Q8N1G0">
    <property type="glycosylation" value="2 sites, 1 glycan"/>
</dbReference>
<dbReference type="GlyGen" id="Q8N1G0">
    <property type="glycosylation" value="6 sites, 1 N-linked glycan (1 site), 1 O-linked glycan (5 sites)"/>
</dbReference>
<dbReference type="iPTMnet" id="Q8N1G0"/>
<dbReference type="PhosphoSitePlus" id="Q8N1G0"/>
<dbReference type="SwissPalm" id="Q8N1G0"/>
<dbReference type="BioMuta" id="ZNF687"/>
<dbReference type="DMDM" id="74759771"/>
<dbReference type="jPOST" id="Q8N1G0"/>
<dbReference type="MassIVE" id="Q8N1G0"/>
<dbReference type="PaxDb" id="9606-ENSP00000319829"/>
<dbReference type="PeptideAtlas" id="Q8N1G0"/>
<dbReference type="ProteomicsDB" id="71597">
    <molecule id="Q8N1G0-1"/>
</dbReference>
<dbReference type="ProteomicsDB" id="71598">
    <molecule id="Q8N1G0-2"/>
</dbReference>
<dbReference type="Pumba" id="Q8N1G0"/>
<dbReference type="Antibodypedia" id="20323">
    <property type="antibodies" value="85 antibodies from 20 providers"/>
</dbReference>
<dbReference type="DNASU" id="57592"/>
<dbReference type="Ensembl" id="ENST00000324048.9">
    <molecule id="Q8N1G0-1"/>
    <property type="protein sequence ID" value="ENSP00000319829.5"/>
    <property type="gene ID" value="ENSG00000143373.18"/>
</dbReference>
<dbReference type="Ensembl" id="ENST00000336715.11">
    <molecule id="Q8N1G0-1"/>
    <property type="protein sequence ID" value="ENSP00000336620.5"/>
    <property type="gene ID" value="ENSG00000143373.18"/>
</dbReference>
<dbReference type="GeneID" id="57592"/>
<dbReference type="KEGG" id="hsa:57592"/>
<dbReference type="MANE-Select" id="ENST00000336715.11">
    <property type="protein sequence ID" value="ENSP00000336620.5"/>
    <property type="RefSeq nucleotide sequence ID" value="NM_020832.3"/>
    <property type="RefSeq protein sequence ID" value="NP_065883.1"/>
</dbReference>
<dbReference type="UCSC" id="uc001exq.4">
    <molecule id="Q8N1G0-1"/>
    <property type="organism name" value="human"/>
</dbReference>
<dbReference type="AGR" id="HGNC:29277"/>
<dbReference type="CTD" id="57592"/>
<dbReference type="DisGeNET" id="57592"/>
<dbReference type="GeneCards" id="ZNF687"/>
<dbReference type="HGNC" id="HGNC:29277">
    <property type="gene designation" value="ZNF687"/>
</dbReference>
<dbReference type="HPA" id="ENSG00000143373">
    <property type="expression patterns" value="Low tissue specificity"/>
</dbReference>
<dbReference type="MalaCards" id="ZNF687"/>
<dbReference type="MIM" id="610568">
    <property type="type" value="gene"/>
</dbReference>
<dbReference type="MIM" id="616833">
    <property type="type" value="phenotype"/>
</dbReference>
<dbReference type="neXtProt" id="NX_Q8N1G0"/>
<dbReference type="OpenTargets" id="ENSG00000143373"/>
<dbReference type="PharmGKB" id="PA142670486"/>
<dbReference type="VEuPathDB" id="HostDB:ENSG00000143373"/>
<dbReference type="eggNOG" id="KOG1721">
    <property type="taxonomic scope" value="Eukaryota"/>
</dbReference>
<dbReference type="GeneTree" id="ENSGT00940000156524"/>
<dbReference type="HOGENOM" id="CLU_006283_1_0_1"/>
<dbReference type="InParanoid" id="Q8N1G0"/>
<dbReference type="OMA" id="PKVPSCQ"/>
<dbReference type="OrthoDB" id="7312725at2759"/>
<dbReference type="PAN-GO" id="Q8N1G0">
    <property type="GO annotations" value="0 GO annotations based on evolutionary models"/>
</dbReference>
<dbReference type="PhylomeDB" id="Q8N1G0"/>
<dbReference type="TreeFam" id="TF329009"/>
<dbReference type="PathwayCommons" id="Q8N1G0"/>
<dbReference type="SignaLink" id="Q8N1G0"/>
<dbReference type="BioGRID-ORCS" id="57592">
    <property type="hits" value="183 hits in 1113 CRISPR screens"/>
</dbReference>
<dbReference type="ChiTaRS" id="ZNF687">
    <property type="organism name" value="human"/>
</dbReference>
<dbReference type="GeneWiki" id="ZNF687"/>
<dbReference type="GenomeRNAi" id="57592"/>
<dbReference type="Pharos" id="Q8N1G0">
    <property type="development level" value="Tbio"/>
</dbReference>
<dbReference type="PRO" id="PR:Q8N1G0"/>
<dbReference type="Proteomes" id="UP000005640">
    <property type="component" value="Chromosome 1"/>
</dbReference>
<dbReference type="RNAct" id="Q8N1G0">
    <property type="molecule type" value="protein"/>
</dbReference>
<dbReference type="Bgee" id="ENSG00000143373">
    <property type="expression patterns" value="Expressed in kidney epithelium and 131 other cell types or tissues"/>
</dbReference>
<dbReference type="ExpressionAtlas" id="Q8N1G0">
    <property type="expression patterns" value="baseline and differential"/>
</dbReference>
<dbReference type="GO" id="GO:0005829">
    <property type="term" value="C:cytosol"/>
    <property type="evidence" value="ECO:0000314"/>
    <property type="project" value="HPA"/>
</dbReference>
<dbReference type="GO" id="GO:0005654">
    <property type="term" value="C:nucleoplasm"/>
    <property type="evidence" value="ECO:0000314"/>
    <property type="project" value="HPA"/>
</dbReference>
<dbReference type="GO" id="GO:0003677">
    <property type="term" value="F:DNA binding"/>
    <property type="evidence" value="ECO:0007669"/>
    <property type="project" value="UniProtKB-KW"/>
</dbReference>
<dbReference type="GO" id="GO:0003700">
    <property type="term" value="F:DNA-binding transcription factor activity"/>
    <property type="evidence" value="ECO:0000303"/>
    <property type="project" value="ARUK-UCL"/>
</dbReference>
<dbReference type="GO" id="GO:0008270">
    <property type="term" value="F:zinc ion binding"/>
    <property type="evidence" value="ECO:0007669"/>
    <property type="project" value="UniProtKB-KW"/>
</dbReference>
<dbReference type="FunFam" id="3.30.160.60:FF:001571">
    <property type="entry name" value="Zinc finger protein 687"/>
    <property type="match status" value="1"/>
</dbReference>
<dbReference type="FunFam" id="3.30.160.60:FF:001813">
    <property type="entry name" value="Zinc finger protein 687 (Predicted)"/>
    <property type="match status" value="1"/>
</dbReference>
<dbReference type="Gene3D" id="3.30.160.60">
    <property type="entry name" value="Classic Zinc Finger"/>
    <property type="match status" value="5"/>
</dbReference>
<dbReference type="InterPro" id="IPR045914">
    <property type="entry name" value="Zn532-like"/>
</dbReference>
<dbReference type="InterPro" id="IPR041697">
    <property type="entry name" value="Znf-C2H2_11"/>
</dbReference>
<dbReference type="InterPro" id="IPR036236">
    <property type="entry name" value="Znf_C2H2_sf"/>
</dbReference>
<dbReference type="InterPro" id="IPR013087">
    <property type="entry name" value="Znf_C2H2_type"/>
</dbReference>
<dbReference type="PANTHER" id="PTHR47222">
    <property type="entry name" value="ZINC FINGER PROTEIN 532-RELATED"/>
    <property type="match status" value="1"/>
</dbReference>
<dbReference type="PANTHER" id="PTHR47222:SF2">
    <property type="entry name" value="ZINC FINGER PROTEIN 687"/>
    <property type="match status" value="1"/>
</dbReference>
<dbReference type="Pfam" id="PF00096">
    <property type="entry name" value="zf-C2H2"/>
    <property type="match status" value="2"/>
</dbReference>
<dbReference type="Pfam" id="PF16622">
    <property type="entry name" value="zf-C2H2_11"/>
    <property type="match status" value="1"/>
</dbReference>
<dbReference type="Pfam" id="PF25412">
    <property type="entry name" value="zf-C2H2_ZNF592"/>
    <property type="match status" value="1"/>
</dbReference>
<dbReference type="SMART" id="SM00355">
    <property type="entry name" value="ZnF_C2H2"/>
    <property type="match status" value="14"/>
</dbReference>
<dbReference type="SUPFAM" id="SSF57667">
    <property type="entry name" value="beta-beta-alpha zinc fingers"/>
    <property type="match status" value="5"/>
</dbReference>
<dbReference type="PROSITE" id="PS00028">
    <property type="entry name" value="ZINC_FINGER_C2H2_1"/>
    <property type="match status" value="9"/>
</dbReference>
<dbReference type="PROSITE" id="PS50157">
    <property type="entry name" value="ZINC_FINGER_C2H2_2"/>
    <property type="match status" value="8"/>
</dbReference>
<organism>
    <name type="scientific">Homo sapiens</name>
    <name type="common">Human</name>
    <dbReference type="NCBI Taxonomy" id="9606"/>
    <lineage>
        <taxon>Eukaryota</taxon>
        <taxon>Metazoa</taxon>
        <taxon>Chordata</taxon>
        <taxon>Craniata</taxon>
        <taxon>Vertebrata</taxon>
        <taxon>Euteleostomi</taxon>
        <taxon>Mammalia</taxon>
        <taxon>Eutheria</taxon>
        <taxon>Euarchontoglires</taxon>
        <taxon>Primates</taxon>
        <taxon>Haplorrhini</taxon>
        <taxon>Catarrhini</taxon>
        <taxon>Hominidae</taxon>
        <taxon>Homo</taxon>
    </lineage>
</organism>
<keyword id="KW-0025">Alternative splicing</keyword>
<keyword id="KW-0963">Cytoplasm</keyword>
<keyword id="KW-0238">DNA-binding</keyword>
<keyword id="KW-1017">Isopeptide bond</keyword>
<keyword id="KW-0479">Metal-binding</keyword>
<keyword id="KW-0488">Methylation</keyword>
<keyword id="KW-0539">Nucleus</keyword>
<keyword id="KW-0597">Phosphoprotein</keyword>
<keyword id="KW-1267">Proteomics identification</keyword>
<keyword id="KW-1185">Reference proteome</keyword>
<keyword id="KW-0677">Repeat</keyword>
<keyword id="KW-0804">Transcription</keyword>
<keyword id="KW-0805">Transcription regulation</keyword>
<keyword id="KW-0832">Ubl conjugation</keyword>
<keyword id="KW-0862">Zinc</keyword>
<keyword id="KW-0863">Zinc-finger</keyword>
<name>ZN687_HUMAN</name>
<sequence>MGDMKTPDFDDLLAAFDIPDIDANEAIHSGPEENEGPGGPGKPEPGVGSESEDTAAASAGDGPGVPAQASDHGLPPPDISVVSVIVKNTVCPEQSEALAGGSAGDGAQAAGVTKEGPVGPHRMQNGFGSPEPSLPGTPHSPAPPSGGTWKEKGMEGKTPLDLFAHFGPEPGDHSDPLPPSAPSPTREGALTPPPFPSSFELAQENGPGMQPPVSSPPLGALKQESCSPHHPQVLAQQGSGSSPKATDIPASASPPPVAGVPFFKQSPGHQSPLASPKVPVCQPLKEEDDDEGPVDKSSPGSPQSPSSGAEAADEDSNDSPASSSSRPLKVRIKTIKTSCGNITRTVTQVPSDPDPPAPLAEGAFLAEASLLKLSPATPTSEGPKVVSVQLGDGTRLKGTVLPVATIQNASTAMLMAASVARKAVVLPGGTATSPKMIAKNVLGLVPQALPKADGRAGLGTGGQKVNGASVVMVQPSKTATGPSTGGGTVISRTQSSLVEAFNKILNSKNLLPAYRPNLSPPAEAGLALPPTGYRCLECGDAFSLEKSLARHYDRRSMRIEVTCNHCARRLVFFNKCSLLLHAREHKDKGLVMQCSHLVMRPVALDQMVGQPDITPLLPVAVPPVSGPLALPALGKGEGAITSSAITTVAAEAPVLPLSTEPPAAPATSAYTCFRCLECKEQCRDKAGMAAHFQQLGPPAPGATSNVCPTCPMMLPNRCSFSAHQRMHKNRPPHVCPECGGNFLQANFQTHLREACLHVSRRVGYRCPSCSVVFGGVNSIKSHIQTSHCEVFHKCPICPMAFKSGPSAHAHLYSQHPSFQTQQAKLIYKCAMCDTVFTHKPLLSSHFDQHLLPQRVSVFKCPSCPLLFAQKRTMLEHLKNTHQSGRLEETAGKGAGGALLTPKTEPEELAVSQGGAAPATEESSSSSEEEEVPSSPEPPRPAKRPRRELGSKGLKGGGGGPGGWTCGLCHSWFPERDEYVAHMKKEHGKSVKKFPCRLCERSFCSAPSLRRHVRVNHEGIKRVYPCRYCTEGKRTFSSRLILEKHVQVRHGLQLGAQSPGRGTTLARGSSARAQGPGRKRRQSSDSCSEEPDSTTPPAKSPRGGPGSGGHGPLRYRSSSSTEQSLMMGLRVEDGAQQCLDCGLCFASPGSLSRHRFISHKKRRGVGKASALGLGDGEEEAPPSRSDPDGGDSPLPASGGPLTCKVCGKSCDSPLNLKTHFRTHGMAFIRARQGAVGDN</sequence>
<feature type="chain" id="PRO_0000234005" description="Zinc finger protein 687">
    <location>
        <begin position="1"/>
        <end position="1237"/>
    </location>
</feature>
<feature type="zinc finger region" description="C2H2-type 1; degenerate" evidence="2">
    <location>
        <begin position="533"/>
        <end position="552"/>
    </location>
</feature>
<feature type="zinc finger region" description="C2H2-type 2" evidence="2">
    <location>
        <begin position="705"/>
        <end position="727"/>
    </location>
</feature>
<feature type="zinc finger region" description="C2H2-type 3" evidence="2">
    <location>
        <begin position="764"/>
        <end position="787"/>
    </location>
</feature>
<feature type="zinc finger region" description="C2H2-type 4" evidence="2">
    <location>
        <begin position="792"/>
        <end position="815"/>
    </location>
</feature>
<feature type="zinc finger region" description="C2H2-type 5" evidence="2">
    <location>
        <begin position="827"/>
        <end position="849"/>
    </location>
</feature>
<feature type="zinc finger region" description="C2H2-type 6" evidence="2">
    <location>
        <begin position="858"/>
        <end position="881"/>
    </location>
</feature>
<feature type="zinc finger region" description="C2H2-type 7" evidence="2">
    <location>
        <begin position="963"/>
        <end position="986"/>
    </location>
</feature>
<feature type="zinc finger region" description="C2H2-type 8" evidence="2">
    <location>
        <begin position="993"/>
        <end position="1016"/>
    </location>
</feature>
<feature type="zinc finger region" description="C2H2-type 9" evidence="2">
    <location>
        <begin position="1135"/>
        <end position="1158"/>
    </location>
</feature>
<feature type="zinc finger region" description="C2H2-type 10" evidence="2">
    <location>
        <begin position="1200"/>
        <end position="1222"/>
    </location>
</feature>
<feature type="region of interest" description="Disordered" evidence="3">
    <location>
        <begin position="1"/>
        <end position="80"/>
    </location>
</feature>
<feature type="region of interest" description="Disordered" evidence="3">
    <location>
        <begin position="96"/>
        <end position="330"/>
    </location>
</feature>
<feature type="region of interest" description="Disordered" evidence="3">
    <location>
        <begin position="880"/>
        <end position="957"/>
    </location>
</feature>
<feature type="region of interest" description="Disordered" evidence="3">
    <location>
        <begin position="1051"/>
        <end position="1121"/>
    </location>
</feature>
<feature type="region of interest" description="Disordered" evidence="3">
    <location>
        <begin position="1159"/>
        <end position="1195"/>
    </location>
</feature>
<feature type="compositionally biased region" description="Low complexity" evidence="3">
    <location>
        <begin position="97"/>
        <end position="111"/>
    </location>
</feature>
<feature type="compositionally biased region" description="Pro residues" evidence="3">
    <location>
        <begin position="132"/>
        <end position="144"/>
    </location>
</feature>
<feature type="compositionally biased region" description="Polar residues" evidence="3">
    <location>
        <begin position="234"/>
        <end position="244"/>
    </location>
</feature>
<feature type="compositionally biased region" description="Low complexity" evidence="3">
    <location>
        <begin position="297"/>
        <end position="310"/>
    </location>
</feature>
<feature type="compositionally biased region" description="Basic and acidic residues" evidence="3">
    <location>
        <begin position="880"/>
        <end position="890"/>
    </location>
</feature>
<feature type="compositionally biased region" description="Low complexity" evidence="3">
    <location>
        <begin position="915"/>
        <end position="925"/>
    </location>
</feature>
<feature type="modified residue" description="Phosphoserine" evidence="1">
    <location>
        <position position="102"/>
    </location>
</feature>
<feature type="modified residue" description="Phosphoserine" evidence="12">
    <location>
        <position position="129"/>
    </location>
</feature>
<feature type="modified residue" description="Phosphoserine" evidence="10 14 15">
    <location>
        <position position="140"/>
    </location>
</feature>
<feature type="modified residue" description="Phosphothreonine" evidence="12">
    <location>
        <position position="148"/>
    </location>
</feature>
<feature type="modified residue" description="Phosphoserine" evidence="15">
    <location>
        <position position="227"/>
    </location>
</feature>
<feature type="modified residue" description="Phosphoserine" evidence="15">
    <location>
        <position position="242"/>
    </location>
</feature>
<feature type="modified residue" description="Phosphoserine" evidence="14">
    <location>
        <position position="251"/>
    </location>
</feature>
<feature type="modified residue" description="Phosphoserine" evidence="10 13 14 15 16">
    <location>
        <position position="253"/>
    </location>
</feature>
<feature type="modified residue" description="Phosphoserine" evidence="10 13 15">
    <location>
        <position position="266"/>
    </location>
</feature>
<feature type="modified residue" description="Phosphoserine" evidence="10 15">
    <location>
        <position position="271"/>
    </location>
</feature>
<feature type="modified residue" description="Phosphoserine" evidence="14 15">
    <location>
        <position position="374"/>
    </location>
</feature>
<feature type="modified residue" description="Phosphothreonine" evidence="15">
    <location>
        <position position="377"/>
    </location>
</feature>
<feature type="modified residue" description="Phosphoserine" evidence="10 14 15">
    <location>
        <position position="433"/>
    </location>
</feature>
<feature type="modified residue" description="Phosphoserine" evidence="12 15">
    <location>
        <position position="495"/>
    </location>
</feature>
<feature type="modified residue" description="Phosphothreonine" evidence="15">
    <location>
        <position position="900"/>
    </location>
</feature>
<feature type="modified residue" description="Phosphoserine" evidence="9 11 13 14 15 16">
    <location>
        <position position="1057"/>
    </location>
</feature>
<feature type="modified residue" description="Omega-N-methylarginine" evidence="1">
    <location>
        <position position="1060"/>
    </location>
</feature>
<feature type="modified residue" description="Phosphoserine" evidence="10">
    <location>
        <position position="1082"/>
    </location>
</feature>
<feature type="modified residue" description="Phosphoserine" evidence="10">
    <location>
        <position position="1083"/>
    </location>
</feature>
<feature type="modified residue" description="Phosphoserine" evidence="10">
    <location>
        <position position="1085"/>
    </location>
</feature>
<feature type="modified residue" description="Omega-N-methylarginine" evidence="1">
    <location>
        <position position="1101"/>
    </location>
</feature>
<feature type="modified residue" description="Phosphoserine" evidence="13">
    <location>
        <position position="1106"/>
    </location>
</feature>
<feature type="modified residue" description="Phosphoserine" evidence="13">
    <location>
        <position position="1118"/>
    </location>
</feature>
<feature type="modified residue" description="Phosphoserine" evidence="1">
    <location>
        <position position="1184"/>
    </location>
</feature>
<feature type="modified residue" description="Phosphoserine" evidence="10 16">
    <location>
        <position position="1191"/>
    </location>
</feature>
<feature type="modified residue" description="Phosphoserine" evidence="10">
    <location>
        <position position="1211"/>
    </location>
</feature>
<feature type="cross-link" description="Glycyl lysine isopeptide (Lys-Gly) (interchain with G-Cter in SUMO2)" evidence="17 18 19 20">
    <location>
        <position position="285"/>
    </location>
</feature>
<feature type="cross-link" description="Glycyl lysine isopeptide (Lys-Gly) (interchain with G-Cter in SUMO2)" evidence="17 18 19 20">
    <location>
        <position position="336"/>
    </location>
</feature>
<feature type="cross-link" description="Glycyl lysine isopeptide (Lys-Gly) (interchain with G-Cter in SUMO2)" evidence="20">
    <location>
        <position position="372"/>
    </location>
</feature>
<feature type="cross-link" description="Glycyl lysine isopeptide (Lys-Gly) (interchain with G-Cter in SUMO2)" evidence="20">
    <location>
        <position position="384"/>
    </location>
</feature>
<feature type="cross-link" description="Glycyl lysine isopeptide (Lys-Gly) (interchain with G-Cter in SUMO2)" evidence="20">
    <location>
        <position position="397"/>
    </location>
</feature>
<feature type="cross-link" description="Glycyl lysine isopeptide (Lys-Gly) (interchain with G-Cter in SUMO2)" evidence="20">
    <location>
        <position position="422"/>
    </location>
</feature>
<feature type="cross-link" description="Glycyl lysine isopeptide (Lys-Gly) (interchain with G-Cter in SUMO2)" evidence="20">
    <location>
        <position position="435"/>
    </location>
</feature>
<feature type="cross-link" description="Glycyl lysine isopeptide (Lys-Gly) (interchain with G-Cter in SUMO2)" evidence="20">
    <location>
        <position position="439"/>
    </location>
</feature>
<feature type="cross-link" description="Glycyl lysine isopeptide (Lys-Gly) (interchain with G-Cter in SUMO2)" evidence="20">
    <location>
        <position position="451"/>
    </location>
</feature>
<feature type="cross-link" description="Glycyl lysine isopeptide (Lys-Gly) (interchain with G-Cter in SUMO2)" evidence="20">
    <location>
        <position position="464"/>
    </location>
</feature>
<feature type="cross-link" description="Glycyl lysine isopeptide (Lys-Gly) (interchain with G-Cter in SUMO2)" evidence="20">
    <location>
        <position position="954"/>
    </location>
</feature>
<feature type="cross-link" description="Glycyl lysine isopeptide (Lys-Gly) (interchain with G-Cter in SUMO2)" evidence="20">
    <location>
        <position position="1043"/>
    </location>
</feature>
<feature type="splice variant" id="VSP_018168" description="In isoform 2." evidence="7">
    <original>YCTEGKRTFSSRLILEKHVQVRHGLQLGAQSPGRGTTLARGSSARAQGPGRKRRQSSDSCSEEPDSTTPPAKSPRGG</original>
    <variation>SKGPGLRAVPLLPSCPLPFQVLHRGKTHLQQPPDPRETCPGPARLAAWGPVPWPGDHLGSGFQCQSPGARSETPPVF</variation>
    <location>
        <begin position="1027"/>
        <end position="1103"/>
    </location>
</feature>
<feature type="splice variant" id="VSP_018169" description="In isoform 2." evidence="7">
    <location>
        <begin position="1104"/>
        <end position="1237"/>
    </location>
</feature>
<feature type="sequence variant" id="VAR_076534" description="In PDB6; uncertain significance; dbSNP:rs869025582." evidence="4">
    <original>S</original>
    <variation>I</variation>
    <location>
        <position position="242"/>
    </location>
</feature>
<feature type="sequence variant" id="VAR_052894" description="In dbSNP:rs3748545.">
    <original>G</original>
    <variation>E</variation>
    <location>
        <position position="259"/>
    </location>
</feature>
<feature type="sequence variant" id="VAR_052895" description="In dbSNP:rs12045766.">
    <original>R</original>
    <variation>T</variation>
    <location>
        <position position="344"/>
    </location>
</feature>
<feature type="sequence variant" id="VAR_076535" description="In PDB6; enhances nuclear localization; increases expression levels; R-937 containing osteoclasts induced by treatment of peripheral blood mononuclear cells with CSF1 and TNFSF11 exhibit a greater number of nuclei, as well as a larger surface area than did those from the control individuals; dbSNP:rs148402804." evidence="4">
    <original>P</original>
    <variation>R</variation>
    <location>
        <position position="937"/>
    </location>
</feature>
<feature type="sequence conflict" description="In Ref. 2; CAH18162." evidence="8" ref="2">
    <original>R</original>
    <variation>W</variation>
    <location>
        <position position="331"/>
    </location>
</feature>
<feature type="sequence conflict" description="In Ref. 6; BAB14406." evidence="8" ref="6">
    <original>K</original>
    <variation>E</variation>
    <location>
        <position position="439"/>
    </location>
</feature>
<feature type="sequence conflict" description="In Ref. 6; BAB14406." evidence="8" ref="6">
    <original>R</original>
    <variation>G</variation>
    <location>
        <position position="515"/>
    </location>
</feature>
<feature type="sequence conflict" description="In Ref. 2; CAH18162." evidence="8" ref="2">
    <original>A</original>
    <variation>V</variation>
    <location>
        <position position="639"/>
    </location>
</feature>
<evidence type="ECO:0000250" key="1">
    <source>
        <dbReference type="UniProtKB" id="Q9D2D7"/>
    </source>
</evidence>
<evidence type="ECO:0000255" key="2">
    <source>
        <dbReference type="PROSITE-ProRule" id="PRU00042"/>
    </source>
</evidence>
<evidence type="ECO:0000256" key="3">
    <source>
        <dbReference type="SAM" id="MobiDB-lite"/>
    </source>
</evidence>
<evidence type="ECO:0000269" key="4">
    <source>
    </source>
</evidence>
<evidence type="ECO:0000269" key="5">
    <source>
    </source>
</evidence>
<evidence type="ECO:0000269" key="6">
    <source>
    </source>
</evidence>
<evidence type="ECO:0000303" key="7">
    <source>
    </source>
</evidence>
<evidence type="ECO:0000305" key="8"/>
<evidence type="ECO:0007744" key="9">
    <source>
    </source>
</evidence>
<evidence type="ECO:0007744" key="10">
    <source>
    </source>
</evidence>
<evidence type="ECO:0007744" key="11">
    <source>
    </source>
</evidence>
<evidence type="ECO:0007744" key="12">
    <source>
    </source>
</evidence>
<evidence type="ECO:0007744" key="13">
    <source>
    </source>
</evidence>
<evidence type="ECO:0007744" key="14">
    <source>
    </source>
</evidence>
<evidence type="ECO:0007744" key="15">
    <source>
    </source>
</evidence>
<evidence type="ECO:0007744" key="16">
    <source>
    </source>
</evidence>
<evidence type="ECO:0007744" key="17">
    <source>
    </source>
</evidence>
<evidence type="ECO:0007744" key="18">
    <source>
    </source>
</evidence>
<evidence type="ECO:0007744" key="19">
    <source>
    </source>
</evidence>
<evidence type="ECO:0007744" key="20">
    <source>
    </source>
</evidence>